<comment type="function">
    <text evidence="1 3 4 5">Topoisomerase IV is essential for chromosome segregation. It relaxes supercoiled DNA (PubMed:23294697, PubMed:23352267, PubMed:24386374). Performs the decatenation events required during the replication of a circular DNA molecule.</text>
</comment>
<comment type="catalytic activity">
    <reaction evidence="1">
        <text>ATP-dependent breakage, passage and rejoining of double-stranded DNA.</text>
        <dbReference type="EC" id="5.6.2.2"/>
    </reaction>
</comment>
<comment type="cofactor">
    <cofactor evidence="1">
        <name>Mg(2+)</name>
        <dbReference type="ChEBI" id="CHEBI:18420"/>
    </cofactor>
    <cofactor evidence="1">
        <name>Mn(2+)</name>
        <dbReference type="ChEBI" id="CHEBI:29035"/>
    </cofactor>
    <cofactor evidence="1">
        <name>Ca(2+)</name>
        <dbReference type="ChEBI" id="CHEBI:29108"/>
    </cofactor>
    <text evidence="1">Binds two Mg(2+) per subunit. The magnesium ions form salt bridges with both the protein and the DNA. Can also accept other divalent metal cations, such as Mn(2+) or Ca(2+).</text>
</comment>
<comment type="activity regulation">
    <text evidence="2 3 4">Pyrrolopyrimidines inhibit both GyrB and its paralog in topoisomerase IV (parE) (PubMed:23294697, PubMed:23352267, PubMed:24386374).</text>
</comment>
<comment type="subunit">
    <text evidence="1">Heterotetramer composed of ParC and ParE.</text>
</comment>
<comment type="similarity">
    <text evidence="1">Belongs to the type II topoisomerase family. ParE type 1 subfamily.</text>
</comment>
<dbReference type="EC" id="5.6.2.2" evidence="1"/>
<dbReference type="EMBL" id="AM233362">
    <property type="protein sequence ID" value="CAJ80165.1"/>
    <property type="molecule type" value="Genomic_DNA"/>
</dbReference>
<dbReference type="RefSeq" id="WP_010032739.1">
    <property type="nucleotide sequence ID" value="NZ_CP009694.1"/>
</dbReference>
<dbReference type="PDB" id="4HXZ">
    <property type="method" value="X-ray"/>
    <property type="resolution" value="2.70 A"/>
    <property type="chains" value="A/B=1-382"/>
</dbReference>
<dbReference type="PDB" id="4HY1">
    <property type="method" value="X-ray"/>
    <property type="resolution" value="1.90 A"/>
    <property type="chains" value="A/B=1-382"/>
</dbReference>
<dbReference type="PDB" id="4HYM">
    <property type="method" value="X-ray"/>
    <property type="resolution" value="1.90 A"/>
    <property type="chains" value="A/B=1-382"/>
</dbReference>
<dbReference type="PDB" id="4KQV">
    <property type="method" value="X-ray"/>
    <property type="resolution" value="2.38 A"/>
    <property type="chains" value="A/B=1-382"/>
</dbReference>
<dbReference type="PDBsum" id="4HXZ"/>
<dbReference type="PDBsum" id="4HY1"/>
<dbReference type="PDBsum" id="4HYM"/>
<dbReference type="PDBsum" id="4KQV"/>
<dbReference type="SMR" id="A0A0J9WZF0"/>
<dbReference type="KEGG" id="ftl:FTL_1726"/>
<dbReference type="EvolutionaryTrace" id="A0A0J9WZF0"/>
<dbReference type="Proteomes" id="UP000001944">
    <property type="component" value="Chromosome"/>
</dbReference>
<dbReference type="GO" id="GO:0005694">
    <property type="term" value="C:chromosome"/>
    <property type="evidence" value="ECO:0007669"/>
    <property type="project" value="InterPro"/>
</dbReference>
<dbReference type="GO" id="GO:0005524">
    <property type="term" value="F:ATP binding"/>
    <property type="evidence" value="ECO:0007669"/>
    <property type="project" value="UniProtKB-UniRule"/>
</dbReference>
<dbReference type="GO" id="GO:0003677">
    <property type="term" value="F:DNA binding"/>
    <property type="evidence" value="ECO:0007669"/>
    <property type="project" value="UniProtKB-UniRule"/>
</dbReference>
<dbReference type="GO" id="GO:0003918">
    <property type="term" value="F:DNA topoisomerase type II (double strand cut, ATP-hydrolyzing) activity"/>
    <property type="evidence" value="ECO:0007669"/>
    <property type="project" value="UniProtKB-UniRule"/>
</dbReference>
<dbReference type="GO" id="GO:0046872">
    <property type="term" value="F:metal ion binding"/>
    <property type="evidence" value="ECO:0007669"/>
    <property type="project" value="UniProtKB-KW"/>
</dbReference>
<dbReference type="GO" id="GO:0007059">
    <property type="term" value="P:chromosome segregation"/>
    <property type="evidence" value="ECO:0007669"/>
    <property type="project" value="UniProtKB-UniRule"/>
</dbReference>
<dbReference type="GO" id="GO:0006265">
    <property type="term" value="P:DNA topological change"/>
    <property type="evidence" value="ECO:0007669"/>
    <property type="project" value="UniProtKB-UniRule"/>
</dbReference>
<dbReference type="CDD" id="cd16928">
    <property type="entry name" value="HATPase_GyrB-like"/>
    <property type="match status" value="1"/>
</dbReference>
<dbReference type="CDD" id="cd00822">
    <property type="entry name" value="TopoII_Trans_DNA_gyrase"/>
    <property type="match status" value="1"/>
</dbReference>
<dbReference type="FunFam" id="3.30.565.10:FF:000002">
    <property type="entry name" value="DNA gyrase subunit B"/>
    <property type="match status" value="1"/>
</dbReference>
<dbReference type="FunFam" id="3.40.50.670:FF:000003">
    <property type="entry name" value="DNA topoisomerase 4 subunit B"/>
    <property type="match status" value="1"/>
</dbReference>
<dbReference type="Gene3D" id="3.30.230.10">
    <property type="match status" value="1"/>
</dbReference>
<dbReference type="Gene3D" id="3.40.50.670">
    <property type="match status" value="1"/>
</dbReference>
<dbReference type="Gene3D" id="3.30.565.10">
    <property type="entry name" value="Histidine kinase-like ATPase, C-terminal domain"/>
    <property type="match status" value="1"/>
</dbReference>
<dbReference type="HAMAP" id="MF_00938">
    <property type="entry name" value="ParE_type1"/>
    <property type="match status" value="1"/>
</dbReference>
<dbReference type="InterPro" id="IPR002288">
    <property type="entry name" value="DNA_gyrase_B_C"/>
</dbReference>
<dbReference type="InterPro" id="IPR036890">
    <property type="entry name" value="HATPase_C_sf"/>
</dbReference>
<dbReference type="InterPro" id="IPR020568">
    <property type="entry name" value="Ribosomal_Su5_D2-typ_SF"/>
</dbReference>
<dbReference type="InterPro" id="IPR014721">
    <property type="entry name" value="Ribsml_uS5_D2-typ_fold_subgr"/>
</dbReference>
<dbReference type="InterPro" id="IPR001241">
    <property type="entry name" value="Topo_IIA"/>
</dbReference>
<dbReference type="InterPro" id="IPR013760">
    <property type="entry name" value="Topo_IIA-like_dom_sf"/>
</dbReference>
<dbReference type="InterPro" id="IPR013759">
    <property type="entry name" value="Topo_IIA_B_C"/>
</dbReference>
<dbReference type="InterPro" id="IPR013506">
    <property type="entry name" value="Topo_IIA_bsu_dom2"/>
</dbReference>
<dbReference type="InterPro" id="IPR018522">
    <property type="entry name" value="TopoIIA_CS"/>
</dbReference>
<dbReference type="InterPro" id="IPR005737">
    <property type="entry name" value="TopoIV_B_Gneg"/>
</dbReference>
<dbReference type="InterPro" id="IPR006171">
    <property type="entry name" value="TOPRIM_dom"/>
</dbReference>
<dbReference type="NCBIfam" id="TIGR01055">
    <property type="entry name" value="parE_Gneg"/>
    <property type="match status" value="1"/>
</dbReference>
<dbReference type="PANTHER" id="PTHR45866">
    <property type="entry name" value="DNA GYRASE/TOPOISOMERASE SUBUNIT B"/>
    <property type="match status" value="1"/>
</dbReference>
<dbReference type="PANTHER" id="PTHR45866:SF4">
    <property type="entry name" value="DNA TOPOISOMERASE 4 SUBUNIT B"/>
    <property type="match status" value="1"/>
</dbReference>
<dbReference type="Pfam" id="PF00204">
    <property type="entry name" value="DNA_gyraseB"/>
    <property type="match status" value="1"/>
</dbReference>
<dbReference type="Pfam" id="PF00986">
    <property type="entry name" value="DNA_gyraseB_C"/>
    <property type="match status" value="1"/>
</dbReference>
<dbReference type="Pfam" id="PF02518">
    <property type="entry name" value="HATPase_c"/>
    <property type="match status" value="1"/>
</dbReference>
<dbReference type="Pfam" id="PF01751">
    <property type="entry name" value="Toprim"/>
    <property type="match status" value="1"/>
</dbReference>
<dbReference type="PRINTS" id="PR01098">
    <property type="entry name" value="TOPISMRASE4B"/>
</dbReference>
<dbReference type="PRINTS" id="PR00418">
    <property type="entry name" value="TPI2FAMILY"/>
</dbReference>
<dbReference type="SMART" id="SM00387">
    <property type="entry name" value="HATPase_c"/>
    <property type="match status" value="1"/>
</dbReference>
<dbReference type="SMART" id="SM00433">
    <property type="entry name" value="TOP2c"/>
    <property type="match status" value="1"/>
</dbReference>
<dbReference type="SUPFAM" id="SSF55874">
    <property type="entry name" value="ATPase domain of HSP90 chaperone/DNA topoisomerase II/histidine kinase"/>
    <property type="match status" value="1"/>
</dbReference>
<dbReference type="SUPFAM" id="SSF54211">
    <property type="entry name" value="Ribosomal protein S5 domain 2-like"/>
    <property type="match status" value="1"/>
</dbReference>
<dbReference type="SUPFAM" id="SSF56719">
    <property type="entry name" value="Type II DNA topoisomerase"/>
    <property type="match status" value="1"/>
</dbReference>
<dbReference type="PROSITE" id="PS00177">
    <property type="entry name" value="TOPOISOMERASE_II"/>
    <property type="match status" value="1"/>
</dbReference>
<dbReference type="PROSITE" id="PS50880">
    <property type="entry name" value="TOPRIM"/>
    <property type="match status" value="1"/>
</dbReference>
<sequence length="627" mass="70355">MQNYNAKSIEVLTGLDPVKKRPGMYTNIENPNHLIQEIIDNSVDEVLAGFASKINITLYEDNSIEVADDGRGMPVDIHPEHKMSGIELIMTKLHSGGKFSNKNYTHSGGLHGVGVSVVNALSTRLEAEIKRDGNVYHIVFEDGFKTKDLEIIDNVGKKNTGTKIRFWPNKKYFDDIKVNFKALKNLLEAKAILCKALTIKYSNEIKKEKLTWHFETGLKGYLDHKLEAETLPAEPFIIDNFSNGDSYLDAVFCWCEDLSESIKNSYVNLIPTPQDGTHVTGLKNGIYDAIKAYIEKNSLSVKNIKITANDSFAQLNYVISVKITNPQFAGQTKEKLSNKDVTNFVATAVKDLLTIWLNQNPDEARQIVENISKVAQKRINADKKTTRKRIMNTTIRLPGKLTDCISSDVNSTELFIVEGDSAGGSAKQARDKNFQAVLPLKGKILNSWELDADTIMNSQEIHNIATAIGVDPDSDDISALRYNKICILADADSDGLHIATLLCAMFLKHFRKLIENGHIYIAQPPLFRIDIGKSTFYALDENERDTILTKNSKLPGKVNIMRFKGLGEMNPAQLRESAMDVSSRRLLQLTISDVYDDTEMLDMLLAKKRAKDRRDWLENYGDRASVE</sequence>
<evidence type="ECO:0000255" key="1">
    <source>
        <dbReference type="HAMAP-Rule" id="MF_00938"/>
    </source>
</evidence>
<evidence type="ECO:0000269" key="2">
    <source>
    </source>
</evidence>
<evidence type="ECO:0000269" key="3">
    <source>
    </source>
</evidence>
<evidence type="ECO:0000269" key="4">
    <source>
    </source>
</evidence>
<evidence type="ECO:0000305" key="5">
    <source>
    </source>
</evidence>
<evidence type="ECO:0007829" key="6">
    <source>
        <dbReference type="PDB" id="4HY1"/>
    </source>
</evidence>
<evidence type="ECO:0007829" key="7">
    <source>
        <dbReference type="PDB" id="4HYM"/>
    </source>
</evidence>
<accession>A0A0J9WZF0</accession>
<protein>
    <recommendedName>
        <fullName evidence="1">DNA topoisomerase 4 subunit B</fullName>
        <ecNumber evidence="1">5.6.2.2</ecNumber>
    </recommendedName>
    <alternativeName>
        <fullName evidence="1">Topoisomerase IV subunit B</fullName>
    </alternativeName>
</protein>
<gene>
    <name evidence="1" type="primary">parE</name>
    <name type="ordered locus">FTL_1726</name>
</gene>
<reference key="1">
    <citation type="submission" date="2006-03" db="EMBL/GenBank/DDBJ databases">
        <title>Complete genome sequence of Francisella tularensis LVS (Live Vaccine Strain).</title>
        <authorList>
            <person name="Chain P."/>
            <person name="Larimer F."/>
            <person name="Land M."/>
            <person name="Stilwagen S."/>
            <person name="Larsson P."/>
            <person name="Bearden S."/>
            <person name="Chu M."/>
            <person name="Oyston P."/>
            <person name="Forsman M."/>
            <person name="Andersson S."/>
            <person name="Lindler L."/>
            <person name="Titball R."/>
            <person name="Garcia E."/>
        </authorList>
    </citation>
    <scope>NUCLEOTIDE SEQUENCE [LARGE SCALE GENOMIC DNA]</scope>
    <source>
        <strain>LVS</strain>
    </source>
</reference>
<reference key="2">
    <citation type="journal article" date="2013" name="Bioorg. Med. Chem. Lett.">
        <title>Pyrrolopyrimidine inhibitors of DNA gyrase B (GyrB) and topoisomerase IV (ParE), Part II: development of inhibitors with broad spectrum, Gram-negative antibacterial activity.</title>
        <authorList>
            <person name="Trzoss M."/>
            <person name="Bensen D.C."/>
            <person name="Li X."/>
            <person name="Chen Z."/>
            <person name="Lam T."/>
            <person name="Zhang J."/>
            <person name="Creighton C.J."/>
            <person name="Cunningham M.L."/>
            <person name="Kwan B."/>
            <person name="Stidham M."/>
            <person name="Nelson K."/>
            <person name="Brown-Driver V."/>
            <person name="Castellano A."/>
            <person name="Shaw K.J."/>
            <person name="Lightstone F.C."/>
            <person name="Wong S.E."/>
            <person name="Nguyen T.B."/>
            <person name="Finn J."/>
            <person name="Tari L.W."/>
        </authorList>
    </citation>
    <scope>FUNCTION</scope>
    <scope>ACTIVITY REGULATION</scope>
</reference>
<reference key="3">
    <citation type="journal article" date="2013" name="Bioorg. Med. Chem. Lett.">
        <title>Pyrrolopyrimidine inhibitors of DNA gyrase B (GyrB) and topoisomerase IV (ParE). Part I: Structure guided discovery and optimization of dual targeting agents with potent, broad-spectrum enzymatic activity.</title>
        <authorList>
            <person name="Tari L.W."/>
            <person name="Trzoss M."/>
            <person name="Bensen D.C."/>
            <person name="Li X."/>
            <person name="Chen Z."/>
            <person name="Lam T."/>
            <person name="Zhang J."/>
            <person name="Creighton C.J."/>
            <person name="Cunningham M.L."/>
            <person name="Kwan B."/>
            <person name="Stidham M."/>
            <person name="Shaw K.J."/>
            <person name="Lightstone F.C."/>
            <person name="Wong S.E."/>
            <person name="Nguyen T.B."/>
            <person name="Nix J."/>
            <person name="Finn J."/>
        </authorList>
    </citation>
    <scope>X-RAY CRYSTALLOGRAPHY (1.90 ANGSTROMS) OF 1-382 IN COMPLEX WITH INHIBITOR</scope>
    <scope>FUNCTION</scope>
    <scope>ACTIVITY REGULATION</scope>
</reference>
<reference key="4">
    <citation type="journal article" date="2013" name="PLoS ONE">
        <title>Tricyclic GyrB/ParE (TriBE) inhibitors: a new class of broad-spectrum dual-targeting antibacterial agents.</title>
        <authorList>
            <person name="Tari L.W."/>
            <person name="Li X."/>
            <person name="Trzoss M."/>
            <person name="Bensen D.C."/>
            <person name="Chen Z."/>
            <person name="Lam T."/>
            <person name="Zhang J."/>
            <person name="Lee S.J."/>
            <person name="Hough G."/>
            <person name="Phillipson D."/>
            <person name="Akers-Rodriguez S."/>
            <person name="Cunningham M.L."/>
            <person name="Kwan B.P."/>
            <person name="Nelson K.J."/>
            <person name="Castellano A."/>
            <person name="Locke J.B."/>
            <person name="Brown-Driver V."/>
            <person name="Murphy T.M."/>
            <person name="Ong V.S."/>
            <person name="Pillar C.M."/>
            <person name="Shinabarger D.L."/>
            <person name="Nix J."/>
            <person name="Lightstone F.C."/>
            <person name="Wong S.E."/>
            <person name="Nguyen T.B."/>
            <person name="Shaw K.J."/>
            <person name="Finn J."/>
        </authorList>
    </citation>
    <scope>X-RAY CRYSTALLOGRAPHY (2.38 ANGSTROMS) OF 1-382 IN COMPLEX WITH INHIBITOR</scope>
    <scope>FUNCTION</scope>
    <scope>ACTIVITY REGULATION</scope>
</reference>
<name>PARE_FRATH</name>
<organism>
    <name type="scientific">Francisella tularensis subsp. holarctica (strain LVS)</name>
    <dbReference type="NCBI Taxonomy" id="376619"/>
    <lineage>
        <taxon>Bacteria</taxon>
        <taxon>Pseudomonadati</taxon>
        <taxon>Pseudomonadota</taxon>
        <taxon>Gammaproteobacteria</taxon>
        <taxon>Thiotrichales</taxon>
        <taxon>Francisellaceae</taxon>
        <taxon>Francisella</taxon>
    </lineage>
</organism>
<keyword id="KW-0002">3D-structure</keyword>
<keyword id="KW-0067">ATP-binding</keyword>
<keyword id="KW-0238">DNA-binding</keyword>
<keyword id="KW-0413">Isomerase</keyword>
<keyword id="KW-0460">Magnesium</keyword>
<keyword id="KW-0479">Metal-binding</keyword>
<keyword id="KW-0547">Nucleotide-binding</keyword>
<keyword id="KW-1185">Reference proteome</keyword>
<keyword id="KW-0799">Topoisomerase</keyword>
<proteinExistence type="evidence at protein level"/>
<feature type="chain" id="PRO_0000435623" description="DNA topoisomerase 4 subunit B">
    <location>
        <begin position="1"/>
        <end position="627"/>
    </location>
</feature>
<feature type="domain" description="Toprim" evidence="1">
    <location>
        <begin position="412"/>
        <end position="525"/>
    </location>
</feature>
<feature type="binding site" evidence="1">
    <location>
        <position position="4"/>
    </location>
    <ligand>
        <name>ATP</name>
        <dbReference type="ChEBI" id="CHEBI:30616"/>
    </ligand>
</feature>
<feature type="binding site" evidence="1">
    <location>
        <position position="41"/>
    </location>
    <ligand>
        <name>ATP</name>
        <dbReference type="ChEBI" id="CHEBI:30616"/>
    </ligand>
</feature>
<feature type="binding site" evidence="1">
    <location>
        <position position="68"/>
    </location>
    <ligand>
        <name>ATP</name>
        <dbReference type="ChEBI" id="CHEBI:30616"/>
    </ligand>
</feature>
<feature type="binding site" evidence="1">
    <location>
        <begin position="109"/>
        <end position="115"/>
    </location>
    <ligand>
        <name>ATP</name>
        <dbReference type="ChEBI" id="CHEBI:30616"/>
    </ligand>
</feature>
<feature type="binding site" evidence="1">
    <location>
        <position position="333"/>
    </location>
    <ligand>
        <name>ATP</name>
        <dbReference type="ChEBI" id="CHEBI:30616"/>
    </ligand>
</feature>
<feature type="binding site" evidence="1">
    <location>
        <position position="418"/>
    </location>
    <ligand>
        <name>Mg(2+)</name>
        <dbReference type="ChEBI" id="CHEBI:18420"/>
        <label>1</label>
        <note>catalytic</note>
    </ligand>
</feature>
<feature type="binding site" evidence="1">
    <location>
        <position position="490"/>
    </location>
    <ligand>
        <name>Mg(2+)</name>
        <dbReference type="ChEBI" id="CHEBI:18420"/>
        <label>1</label>
        <note>catalytic</note>
    </ligand>
</feature>
<feature type="binding site" evidence="1">
    <location>
        <position position="490"/>
    </location>
    <ligand>
        <name>Mg(2+)</name>
        <dbReference type="ChEBI" id="CHEBI:18420"/>
        <label>2</label>
    </ligand>
</feature>
<feature type="binding site" evidence="1">
    <location>
        <position position="492"/>
    </location>
    <ligand>
        <name>Mg(2+)</name>
        <dbReference type="ChEBI" id="CHEBI:18420"/>
        <label>2</label>
    </ligand>
</feature>
<feature type="site" description="Interaction with DNA" evidence="1">
    <location>
        <position position="443"/>
    </location>
</feature>
<feature type="site" description="Interaction with DNA" evidence="1">
    <location>
        <position position="446"/>
    </location>
</feature>
<feature type="site" description="Interaction with DNA" evidence="1">
    <location>
        <position position="497"/>
    </location>
</feature>
<feature type="site" description="Interaction with DNA" evidence="1">
    <location>
        <position position="613"/>
    </location>
</feature>
<feature type="strand" evidence="6">
    <location>
        <begin position="9"/>
        <end position="13"/>
    </location>
</feature>
<feature type="helix" evidence="6">
    <location>
        <begin position="16"/>
        <end position="20"/>
    </location>
</feature>
<feature type="helix" evidence="6">
    <location>
        <begin position="22"/>
        <end position="24"/>
    </location>
</feature>
<feature type="helix" evidence="6">
    <location>
        <begin position="32"/>
        <end position="47"/>
    </location>
</feature>
<feature type="strand" evidence="6">
    <location>
        <begin position="53"/>
        <end position="58"/>
    </location>
</feature>
<feature type="strand" evidence="6">
    <location>
        <begin position="64"/>
        <end position="68"/>
    </location>
</feature>
<feature type="strand" evidence="7">
    <location>
        <begin position="76"/>
        <end position="78"/>
    </location>
</feature>
<feature type="turn" evidence="6">
    <location>
        <begin position="79"/>
        <end position="82"/>
    </location>
</feature>
<feature type="helix" evidence="6">
    <location>
        <begin position="85"/>
        <end position="91"/>
    </location>
</feature>
<feature type="strand" evidence="6">
    <location>
        <begin position="92"/>
        <end position="99"/>
    </location>
</feature>
<feature type="strand" evidence="6">
    <location>
        <begin position="110"/>
        <end position="113"/>
    </location>
</feature>
<feature type="helix" evidence="6">
    <location>
        <begin position="116"/>
        <end position="120"/>
    </location>
</feature>
<feature type="strand" evidence="6">
    <location>
        <begin position="122"/>
        <end position="131"/>
    </location>
</feature>
<feature type="strand" evidence="6">
    <location>
        <begin position="134"/>
        <end position="141"/>
    </location>
</feature>
<feature type="strand" evidence="6">
    <location>
        <begin position="144"/>
        <end position="154"/>
    </location>
</feature>
<feature type="strand" evidence="6">
    <location>
        <begin position="161"/>
        <end position="168"/>
    </location>
</feature>
<feature type="helix" evidence="6">
    <location>
        <begin position="170"/>
        <end position="172"/>
    </location>
</feature>
<feature type="helix" evidence="6">
    <location>
        <begin position="180"/>
        <end position="192"/>
    </location>
</feature>
<feature type="strand" evidence="6">
    <location>
        <begin position="198"/>
        <end position="203"/>
    </location>
</feature>
<feature type="turn" evidence="6">
    <location>
        <begin position="204"/>
        <end position="207"/>
    </location>
</feature>
<feature type="strand" evidence="6">
    <location>
        <begin position="208"/>
        <end position="212"/>
    </location>
</feature>
<feature type="turn" evidence="6">
    <location>
        <begin position="215"/>
        <end position="220"/>
    </location>
</feature>
<feature type="helix" evidence="6">
    <location>
        <begin position="221"/>
        <end position="226"/>
    </location>
</feature>
<feature type="strand" evidence="6">
    <location>
        <begin position="231"/>
        <end position="245"/>
    </location>
</feature>
<feature type="strand" evidence="6">
    <location>
        <begin position="247"/>
        <end position="254"/>
    </location>
</feature>
<feature type="strand" evidence="6">
    <location>
        <begin position="263"/>
        <end position="267"/>
    </location>
</feature>
<feature type="helix" evidence="6">
    <location>
        <begin position="277"/>
        <end position="297"/>
    </location>
</feature>
<feature type="helix" evidence="6">
    <location>
        <begin position="308"/>
        <end position="312"/>
    </location>
</feature>
<feature type="strand" evidence="6">
    <location>
        <begin position="315"/>
        <end position="322"/>
    </location>
</feature>
<feature type="turn" evidence="6">
    <location>
        <begin position="330"/>
        <end position="333"/>
    </location>
</feature>
<feature type="helix" evidence="6">
    <location>
        <begin position="340"/>
        <end position="359"/>
    </location>
</feature>
<feature type="helix" evidence="6">
    <location>
        <begin position="361"/>
        <end position="375"/>
    </location>
</feature>